<reference key="1">
    <citation type="submission" date="2006-12" db="EMBL/GenBank/DDBJ databases">
        <title>Complete sequence of Chlorobium phaeobacteroides DSM 266.</title>
        <authorList>
            <consortium name="US DOE Joint Genome Institute"/>
            <person name="Copeland A."/>
            <person name="Lucas S."/>
            <person name="Lapidus A."/>
            <person name="Barry K."/>
            <person name="Detter J.C."/>
            <person name="Glavina del Rio T."/>
            <person name="Hammon N."/>
            <person name="Israni S."/>
            <person name="Pitluck S."/>
            <person name="Goltsman E."/>
            <person name="Schmutz J."/>
            <person name="Larimer F."/>
            <person name="Land M."/>
            <person name="Hauser L."/>
            <person name="Mikhailova N."/>
            <person name="Li T."/>
            <person name="Overmann J."/>
            <person name="Bryant D.A."/>
            <person name="Richardson P."/>
        </authorList>
    </citation>
    <scope>NUCLEOTIDE SEQUENCE [LARGE SCALE GENOMIC DNA]</scope>
    <source>
        <strain>DSM 266 / SMG 266 / 2430</strain>
    </source>
</reference>
<keyword id="KW-0997">Cell inner membrane</keyword>
<keyword id="KW-1003">Cell membrane</keyword>
<keyword id="KW-0378">Hydrolase</keyword>
<keyword id="KW-0472">Membrane</keyword>
<keyword id="KW-0479">Metal-binding</keyword>
<keyword id="KW-0482">Metalloprotease</keyword>
<keyword id="KW-0645">Protease</keyword>
<keyword id="KW-1185">Reference proteome</keyword>
<keyword id="KW-0812">Transmembrane</keyword>
<keyword id="KW-1133">Transmembrane helix</keyword>
<keyword id="KW-0862">Zinc</keyword>
<accession>A1BGS5</accession>
<protein>
    <recommendedName>
        <fullName evidence="1">Protease HtpX homolog</fullName>
        <ecNumber evidence="1">3.4.24.-</ecNumber>
    </recommendedName>
</protein>
<name>HTPX_CHLPD</name>
<proteinExistence type="inferred from homology"/>
<feature type="chain" id="PRO_1000020858" description="Protease HtpX homolog">
    <location>
        <begin position="1"/>
        <end position="291"/>
    </location>
</feature>
<feature type="transmembrane region" description="Helical" evidence="1">
    <location>
        <begin position="4"/>
        <end position="24"/>
    </location>
</feature>
<feature type="transmembrane region" description="Helical" evidence="1">
    <location>
        <begin position="38"/>
        <end position="58"/>
    </location>
</feature>
<feature type="transmembrane region" description="Helical" evidence="1">
    <location>
        <begin position="159"/>
        <end position="179"/>
    </location>
</feature>
<feature type="transmembrane region" description="Helical" evidence="1">
    <location>
        <begin position="199"/>
        <end position="219"/>
    </location>
</feature>
<feature type="active site" evidence="1">
    <location>
        <position position="145"/>
    </location>
</feature>
<feature type="binding site" evidence="1">
    <location>
        <position position="144"/>
    </location>
    <ligand>
        <name>Zn(2+)</name>
        <dbReference type="ChEBI" id="CHEBI:29105"/>
        <note>catalytic</note>
    </ligand>
</feature>
<feature type="binding site" evidence="1">
    <location>
        <position position="148"/>
    </location>
    <ligand>
        <name>Zn(2+)</name>
        <dbReference type="ChEBI" id="CHEBI:29105"/>
        <note>catalytic</note>
    </ligand>
</feature>
<feature type="binding site" evidence="1">
    <location>
        <position position="224"/>
    </location>
    <ligand>
        <name>Zn(2+)</name>
        <dbReference type="ChEBI" id="CHEBI:29105"/>
        <note>catalytic</note>
    </ligand>
</feature>
<dbReference type="EC" id="3.4.24.-" evidence="1"/>
<dbReference type="EMBL" id="CP000492">
    <property type="protein sequence ID" value="ABL65602.1"/>
    <property type="molecule type" value="Genomic_DNA"/>
</dbReference>
<dbReference type="RefSeq" id="WP_011745412.1">
    <property type="nucleotide sequence ID" value="NC_008639.1"/>
</dbReference>
<dbReference type="SMR" id="A1BGS5"/>
<dbReference type="STRING" id="290317.Cpha266_1580"/>
<dbReference type="MEROPS" id="M48.002"/>
<dbReference type="KEGG" id="cph:Cpha266_1580"/>
<dbReference type="eggNOG" id="COG0501">
    <property type="taxonomic scope" value="Bacteria"/>
</dbReference>
<dbReference type="HOGENOM" id="CLU_042266_1_0_10"/>
<dbReference type="OrthoDB" id="9810445at2"/>
<dbReference type="Proteomes" id="UP000008701">
    <property type="component" value="Chromosome"/>
</dbReference>
<dbReference type="GO" id="GO:0005886">
    <property type="term" value="C:plasma membrane"/>
    <property type="evidence" value="ECO:0007669"/>
    <property type="project" value="UniProtKB-SubCell"/>
</dbReference>
<dbReference type="GO" id="GO:0004222">
    <property type="term" value="F:metalloendopeptidase activity"/>
    <property type="evidence" value="ECO:0007669"/>
    <property type="project" value="UniProtKB-UniRule"/>
</dbReference>
<dbReference type="GO" id="GO:0008270">
    <property type="term" value="F:zinc ion binding"/>
    <property type="evidence" value="ECO:0007669"/>
    <property type="project" value="UniProtKB-UniRule"/>
</dbReference>
<dbReference type="GO" id="GO:0006508">
    <property type="term" value="P:proteolysis"/>
    <property type="evidence" value="ECO:0007669"/>
    <property type="project" value="UniProtKB-KW"/>
</dbReference>
<dbReference type="CDD" id="cd07335">
    <property type="entry name" value="M48B_HtpX_like"/>
    <property type="match status" value="1"/>
</dbReference>
<dbReference type="Gene3D" id="3.30.2010.10">
    <property type="entry name" value="Metalloproteases ('zincins'), catalytic domain"/>
    <property type="match status" value="1"/>
</dbReference>
<dbReference type="HAMAP" id="MF_00188">
    <property type="entry name" value="Pept_M48_protease_HtpX"/>
    <property type="match status" value="1"/>
</dbReference>
<dbReference type="InterPro" id="IPR050083">
    <property type="entry name" value="HtpX_protease"/>
</dbReference>
<dbReference type="InterPro" id="IPR022919">
    <property type="entry name" value="Pept_M48_protease_HtpX"/>
</dbReference>
<dbReference type="InterPro" id="IPR001915">
    <property type="entry name" value="Peptidase_M48"/>
</dbReference>
<dbReference type="NCBIfam" id="NF003965">
    <property type="entry name" value="PRK05457.1"/>
    <property type="match status" value="1"/>
</dbReference>
<dbReference type="PANTHER" id="PTHR43221">
    <property type="entry name" value="PROTEASE HTPX"/>
    <property type="match status" value="1"/>
</dbReference>
<dbReference type="PANTHER" id="PTHR43221:SF1">
    <property type="entry name" value="PROTEASE HTPX"/>
    <property type="match status" value="1"/>
</dbReference>
<dbReference type="Pfam" id="PF01435">
    <property type="entry name" value="Peptidase_M48"/>
    <property type="match status" value="1"/>
</dbReference>
<evidence type="ECO:0000255" key="1">
    <source>
        <dbReference type="HAMAP-Rule" id="MF_00188"/>
    </source>
</evidence>
<organism>
    <name type="scientific">Chlorobium phaeobacteroides (strain DSM 266 / SMG 266 / 2430)</name>
    <dbReference type="NCBI Taxonomy" id="290317"/>
    <lineage>
        <taxon>Bacteria</taxon>
        <taxon>Pseudomonadati</taxon>
        <taxon>Chlorobiota</taxon>
        <taxon>Chlorobiia</taxon>
        <taxon>Chlorobiales</taxon>
        <taxon>Chlorobiaceae</taxon>
        <taxon>Chlorobium/Pelodictyon group</taxon>
        <taxon>Chlorobium</taxon>
    </lineage>
</organism>
<comment type="cofactor">
    <cofactor evidence="1">
        <name>Zn(2+)</name>
        <dbReference type="ChEBI" id="CHEBI:29105"/>
    </cofactor>
    <text evidence="1">Binds 1 zinc ion per subunit.</text>
</comment>
<comment type="subcellular location">
    <subcellularLocation>
        <location evidence="1">Cell inner membrane</location>
        <topology evidence="1">Multi-pass membrane protein</topology>
    </subcellularLocation>
</comment>
<comment type="similarity">
    <text evidence="1">Belongs to the peptidase M48B family.</text>
</comment>
<gene>
    <name evidence="1" type="primary">htpX</name>
    <name type="ordered locus">Cpha266_1580</name>
</gene>
<sequence length="291" mass="31121">MKRVVLFLFTNLAVMLVLSVSARVLGVDRFLTGNGLDMGMLLLFAALIGFGGSFISLLMSKTMAKWSTGARVIQQPANQNEVWLVDTVSQLSKKAGLAMPEVAIYDGAPNAFATGPSKSRSLVAVSTGLLQSMDRKQVEAVLAHEVAHIDNGDMVTLTLIQGVLNTFVIFLSRVIAYAIDSFLRSDDDESGSPGIGYWISSIIFEIMFGILASVVVMYFSRKREYRADAGAAVLLGDRRPMIDALRALGGLQAGQLPKEMAASGIAGGGMMALFSSHPPLESRIAALESAR</sequence>